<comment type="function">
    <text evidence="1 2">Catalyzes the O-methylation, and thereby the inactivation, of catecholamine neurotransmitters and catechol hormones (By similarity). Required for auditory function (By similarity). Component of the cochlear hair cell's mechanotransduction (MET) machinery. Involved in the assembly of the asymmetric tip-link MET complex. Required for transportation of TMC1 and TMC2 proteins into the mechanically sensitive stereocilia of the hair cells. The function in MET is independent of the enzymatic activity (By similarity).</text>
</comment>
<comment type="catalytic activity">
    <reaction evidence="1">
        <text>a catechol + S-adenosyl-L-methionine = a guaiacol + S-adenosyl-L-homocysteine + H(+)</text>
        <dbReference type="Rhea" id="RHEA:17877"/>
        <dbReference type="ChEBI" id="CHEBI:15378"/>
        <dbReference type="ChEBI" id="CHEBI:33566"/>
        <dbReference type="ChEBI" id="CHEBI:57856"/>
        <dbReference type="ChEBI" id="CHEBI:59789"/>
        <dbReference type="ChEBI" id="CHEBI:134251"/>
        <dbReference type="EC" id="2.1.1.6"/>
    </reaction>
    <physiologicalReaction direction="left-to-right" evidence="1">
        <dbReference type="Rhea" id="RHEA:17878"/>
    </physiologicalReaction>
</comment>
<comment type="subunit">
    <text evidence="1">Interacts with LHFPL5, PCDH15, TMC1, TMC2 and TMIE. Interacts directly with TMC1. The interaction of TOMT with TMC1 and TMC2 is required for the transportation of TMC1/2 into the stereocilia of hair cells.</text>
</comment>
<comment type="subcellular location">
    <molecule>Isoform 1</molecule>
    <subcellularLocation>
        <location evidence="3">Membrane</location>
        <topology evidence="3">Single-pass membrane protein</topology>
    </subcellularLocation>
</comment>
<comment type="subcellular location">
    <molecule>Isoform 2</molecule>
    <subcellularLocation>
        <location evidence="1">Cytoplasm</location>
    </subcellularLocation>
    <subcellularLocation>
        <location evidence="1">Endoplasmic reticulum</location>
    </subcellularLocation>
    <text evidence="1">Localized to the cell body of the cochlear hair cells, but is not present in the stereocilia. Present but not restricted to the apical cistern, Hensen's body and the subsurface cistern.</text>
</comment>
<comment type="alternative products">
    <event type="alternative splicing"/>
    <isoform>
        <id>P86243-1</id>
        <name evidence="5">1</name>
        <name evidence="5">D'</name>
        <sequence type="displayed"/>
    </isoform>
    <isoform>
        <id>P86243-2</id>
        <name evidence="5">2</name>
        <name evidence="5">E'</name>
        <sequence type="described" ref="VSP_037158"/>
    </isoform>
</comment>
<comment type="miscellaneous">
    <text evidence="6">LRRC51 and TOMT were originally considered as alternative reading frames, LRTOMT1 and LRTOMT2 of the same LRTOMT gene in primates.</text>
</comment>
<comment type="similarity">
    <text evidence="4">Belongs to the class I-like SAM-binding methyltransferase superfamily. Cation-dependent O-methyltransferase family.</text>
</comment>
<reference evidence="7" key="1">
    <citation type="journal article" date="2008" name="Nat. Genet.">
        <title>Mutations of LRTOMT, a fusion gene with alternative reading frames, cause nonsyndromic deafness in humans.</title>
        <authorList>
            <person name="Ahmed Z.M."/>
            <person name="Masmoudi S."/>
            <person name="Kalay E."/>
            <person name="Belyantseva I.A."/>
            <person name="Mosrati M.A."/>
            <person name="Collin R.W.J."/>
            <person name="Riazuddin S."/>
            <person name="Hmani-Aifa M."/>
            <person name="Venselaar H."/>
            <person name="Kawar M.N."/>
            <person name="Tlili A."/>
            <person name="van der Zwaag B."/>
            <person name="Khan S.Y."/>
            <person name="Ayadi L."/>
            <person name="Riazuddin S.A."/>
            <person name="Morell R.J."/>
            <person name="Griffith A.J."/>
            <person name="Charfedine I."/>
            <person name="Caylan R."/>
            <person name="Oostrik J."/>
            <person name="Karaguzel A."/>
            <person name="Ghorbel A."/>
            <person name="Riazuddin S."/>
            <person name="Friedman T.B."/>
            <person name="Ayadi H."/>
            <person name="Kremer H."/>
        </authorList>
    </citation>
    <scope>NUCLEOTIDE SEQUENCE [MRNA] (ISOFORMS 1 AND 2)</scope>
    <source>
        <tissue evidence="5">Brain</tissue>
    </source>
</reference>
<gene>
    <name evidence="2" type="primary">TOMT</name>
    <name evidence="2" type="synonym">COMT2</name>
    <name evidence="6" type="synonym">LRTOMT</name>
</gene>
<proteinExistence type="evidence at transcript level"/>
<evidence type="ECO:0000250" key="1">
    <source>
        <dbReference type="UniProtKB" id="A1Y9I9"/>
    </source>
</evidence>
<evidence type="ECO:0000250" key="2">
    <source>
        <dbReference type="UniProtKB" id="Q8WZ04"/>
    </source>
</evidence>
<evidence type="ECO:0000255" key="3"/>
<evidence type="ECO:0000255" key="4">
    <source>
        <dbReference type="PROSITE-ProRule" id="PRU01019"/>
    </source>
</evidence>
<evidence type="ECO:0000269" key="5">
    <source>
    </source>
</evidence>
<evidence type="ECO:0000303" key="6">
    <source>
    </source>
</evidence>
<evidence type="ECO:0000305" key="7"/>
<sequence>MGTPWRKRKGIAGPGLPHLSCALVLQPRAQVGTMSPAIALAFLPLVVTLLVRYRHYFRLLVRTVLLRSLRDCLSGLRIEERAFSYVLTHALPGDPGHILTTLDHWSSCCEYLSHMGPVKGQILMRLVEEKAPACVLELGTYCGYSTLLIARALPPGGRLLTVERDPRTAAVAEKLIRLAGFDEHMVELIVGSSEDVIPCLRTQYQLSRADLVLLAHRPRCYLRDLQLLEAHALLPAGATVLADHVLFPGAPRFLQYAKSCGRYRCRLHHTGLPDFPAIKDGIAQLTYAGPG</sequence>
<name>TOMT_PANTR</name>
<accession>P86243</accession>
<dbReference type="EC" id="2.1.1.6" evidence="1"/>
<dbReference type="EMBL" id="EU627074">
    <property type="status" value="NOT_ANNOTATED_CDS"/>
    <property type="molecule type" value="mRNA"/>
</dbReference>
<dbReference type="EMBL" id="EU627075">
    <property type="status" value="NOT_ANNOTATED_CDS"/>
    <property type="molecule type" value="mRNA"/>
</dbReference>
<dbReference type="RefSeq" id="NP_001186282.1">
    <molecule id="P86243-1"/>
    <property type="nucleotide sequence ID" value="NM_001199353.1"/>
</dbReference>
<dbReference type="RefSeq" id="NP_001269004.1">
    <molecule id="P86243-2"/>
    <property type="nucleotide sequence ID" value="NM_001282075.1"/>
</dbReference>
<dbReference type="RefSeq" id="XP_016775412.1">
    <property type="nucleotide sequence ID" value="XM_016919923.1"/>
</dbReference>
<dbReference type="RefSeq" id="XP_016775414.1">
    <property type="nucleotide sequence ID" value="XM_016919925.1"/>
</dbReference>
<dbReference type="RefSeq" id="XP_016775415.1">
    <property type="nucleotide sequence ID" value="XM_016919926.1"/>
</dbReference>
<dbReference type="SMR" id="P86243"/>
<dbReference type="FunCoup" id="P86243">
    <property type="interactions" value="204"/>
</dbReference>
<dbReference type="STRING" id="9598.ENSPTRP00000075354"/>
<dbReference type="Ensembl" id="ENSPTRT00000107086.1">
    <molecule id="P86243-1"/>
    <property type="protein sequence ID" value="ENSPTRP00000075354.1"/>
    <property type="gene ID" value="ENSPTRG00000004025.5"/>
</dbReference>
<dbReference type="GeneID" id="748243"/>
<dbReference type="CTD" id="220074"/>
<dbReference type="GeneTree" id="ENSGT00940000161220"/>
<dbReference type="InParanoid" id="P86243"/>
<dbReference type="OrthoDB" id="4828at9604"/>
<dbReference type="Proteomes" id="UP000002277">
    <property type="component" value="Chromosome 11"/>
</dbReference>
<dbReference type="Bgee" id="ENSPTRG00000004025">
    <property type="expression patterns" value="Expressed in testis and 21 other cell types or tissues"/>
</dbReference>
<dbReference type="GO" id="GO:0045177">
    <property type="term" value="C:apical part of cell"/>
    <property type="evidence" value="ECO:0000250"/>
    <property type="project" value="UniProtKB"/>
</dbReference>
<dbReference type="GO" id="GO:0005737">
    <property type="term" value="C:cytoplasm"/>
    <property type="evidence" value="ECO:0000250"/>
    <property type="project" value="UniProtKB"/>
</dbReference>
<dbReference type="GO" id="GO:0005783">
    <property type="term" value="C:endoplasmic reticulum"/>
    <property type="evidence" value="ECO:0000250"/>
    <property type="project" value="UniProtKB"/>
</dbReference>
<dbReference type="GO" id="GO:0016020">
    <property type="term" value="C:membrane"/>
    <property type="evidence" value="ECO:0007669"/>
    <property type="project" value="UniProtKB-SubCell"/>
</dbReference>
<dbReference type="GO" id="GO:0016206">
    <property type="term" value="F:catechol O-methyltransferase activity"/>
    <property type="evidence" value="ECO:0000250"/>
    <property type="project" value="UniProtKB"/>
</dbReference>
<dbReference type="GO" id="GO:0060117">
    <property type="term" value="P:auditory receptor cell development"/>
    <property type="evidence" value="ECO:0007669"/>
    <property type="project" value="Ensembl"/>
</dbReference>
<dbReference type="GO" id="GO:0042424">
    <property type="term" value="P:catecholamine catabolic process"/>
    <property type="evidence" value="ECO:0000250"/>
    <property type="project" value="UniProtKB"/>
</dbReference>
<dbReference type="GO" id="GO:0032502">
    <property type="term" value="P:developmental process"/>
    <property type="evidence" value="ECO:0000318"/>
    <property type="project" value="GO_Central"/>
</dbReference>
<dbReference type="GO" id="GO:0042417">
    <property type="term" value="P:dopamine metabolic process"/>
    <property type="evidence" value="ECO:0000318"/>
    <property type="project" value="GO_Central"/>
</dbReference>
<dbReference type="GO" id="GO:0032259">
    <property type="term" value="P:methylation"/>
    <property type="evidence" value="ECO:0007669"/>
    <property type="project" value="UniProtKB-KW"/>
</dbReference>
<dbReference type="GO" id="GO:1904591">
    <property type="term" value="P:positive regulation of protein import"/>
    <property type="evidence" value="ECO:0007669"/>
    <property type="project" value="Ensembl"/>
</dbReference>
<dbReference type="GO" id="GO:0007605">
    <property type="term" value="P:sensory perception of sound"/>
    <property type="evidence" value="ECO:0007669"/>
    <property type="project" value="UniProtKB-KW"/>
</dbReference>
<dbReference type="CDD" id="cd02440">
    <property type="entry name" value="AdoMet_MTases"/>
    <property type="match status" value="1"/>
</dbReference>
<dbReference type="FunFam" id="3.40.50.150:FF:000054">
    <property type="entry name" value="Catechol O-methyltransferase"/>
    <property type="match status" value="1"/>
</dbReference>
<dbReference type="Gene3D" id="3.40.50.150">
    <property type="entry name" value="Vaccinia Virus protein VP39"/>
    <property type="match status" value="1"/>
</dbReference>
<dbReference type="InterPro" id="IPR029063">
    <property type="entry name" value="SAM-dependent_MTases_sf"/>
</dbReference>
<dbReference type="InterPro" id="IPR002935">
    <property type="entry name" value="SAM_O-MeTrfase"/>
</dbReference>
<dbReference type="PANTHER" id="PTHR43836">
    <property type="entry name" value="CATECHOL O-METHYLTRANSFERASE 1-RELATED"/>
    <property type="match status" value="1"/>
</dbReference>
<dbReference type="PANTHER" id="PTHR43836:SF1">
    <property type="entry name" value="TRANSMEMBRANE O-METHYLTRANSFERASE"/>
    <property type="match status" value="1"/>
</dbReference>
<dbReference type="Pfam" id="PF01596">
    <property type="entry name" value="Methyltransf_3"/>
    <property type="match status" value="1"/>
</dbReference>
<dbReference type="SUPFAM" id="SSF53335">
    <property type="entry name" value="S-adenosyl-L-methionine-dependent methyltransferases"/>
    <property type="match status" value="1"/>
</dbReference>
<dbReference type="PROSITE" id="PS51682">
    <property type="entry name" value="SAM_OMT_I"/>
    <property type="match status" value="1"/>
</dbReference>
<protein>
    <recommendedName>
        <fullName evidence="1">Transmembrane O-methyltransferase</fullName>
        <ecNumber evidence="1">2.1.1.6</ecNumber>
    </recommendedName>
    <alternativeName>
        <fullName evidence="1">Catechol O-methyltransferase 2</fullName>
    </alternativeName>
    <alternativeName>
        <fullName evidence="6">Protein LRTOMT2</fullName>
    </alternativeName>
</protein>
<feature type="chain" id="PRO_0000372487" description="Transmembrane O-methyltransferase">
    <location>
        <begin position="1"/>
        <end position="291"/>
    </location>
</feature>
<feature type="transmembrane region" description="Helical" evidence="3">
    <location>
        <begin position="31"/>
        <end position="51"/>
    </location>
</feature>
<feature type="binding site" evidence="4">
    <location>
        <position position="137"/>
    </location>
    <ligand>
        <name>S-adenosyl-L-methionine</name>
        <dbReference type="ChEBI" id="CHEBI:59789"/>
    </ligand>
</feature>
<feature type="binding site" evidence="4">
    <location>
        <begin position="139"/>
        <end position="140"/>
    </location>
    <ligand>
        <name>S-adenosyl-L-methionine</name>
        <dbReference type="ChEBI" id="CHEBI:59789"/>
    </ligand>
</feature>
<feature type="binding site" evidence="4">
    <location>
        <position position="145"/>
    </location>
    <ligand>
        <name>S-adenosyl-L-methionine</name>
        <dbReference type="ChEBI" id="CHEBI:59789"/>
    </ligand>
</feature>
<feature type="binding site" evidence="4">
    <location>
        <position position="163"/>
    </location>
    <ligand>
        <name>S-adenosyl-L-methionine</name>
        <dbReference type="ChEBI" id="CHEBI:59789"/>
    </ligand>
</feature>
<feature type="binding site" evidence="4">
    <location>
        <position position="193"/>
    </location>
    <ligand>
        <name>S-adenosyl-L-methionine</name>
        <dbReference type="ChEBI" id="CHEBI:59789"/>
    </ligand>
</feature>
<feature type="splice variant" id="VSP_037158" description="In isoform 2." evidence="6">
    <location>
        <begin position="28"/>
        <end position="67"/>
    </location>
</feature>
<organism>
    <name type="scientific">Pan troglodytes</name>
    <name type="common">Chimpanzee</name>
    <dbReference type="NCBI Taxonomy" id="9598"/>
    <lineage>
        <taxon>Eukaryota</taxon>
        <taxon>Metazoa</taxon>
        <taxon>Chordata</taxon>
        <taxon>Craniata</taxon>
        <taxon>Vertebrata</taxon>
        <taxon>Euteleostomi</taxon>
        <taxon>Mammalia</taxon>
        <taxon>Eutheria</taxon>
        <taxon>Euarchontoglires</taxon>
        <taxon>Primates</taxon>
        <taxon>Haplorrhini</taxon>
        <taxon>Catarrhini</taxon>
        <taxon>Hominidae</taxon>
        <taxon>Pan</taxon>
    </lineage>
</organism>
<keyword id="KW-0025">Alternative splicing</keyword>
<keyword id="KW-0128">Catecholamine metabolism</keyword>
<keyword id="KW-0963">Cytoplasm</keyword>
<keyword id="KW-0209">Deafness</keyword>
<keyword id="KW-0256">Endoplasmic reticulum</keyword>
<keyword id="KW-1009">Hearing</keyword>
<keyword id="KW-0472">Membrane</keyword>
<keyword id="KW-0489">Methyltransferase</keyword>
<keyword id="KW-0531">Neurotransmitter degradation</keyword>
<keyword id="KW-1185">Reference proteome</keyword>
<keyword id="KW-0949">S-adenosyl-L-methionine</keyword>
<keyword id="KW-0808">Transferase</keyword>
<keyword id="KW-0812">Transmembrane</keyword>
<keyword id="KW-1133">Transmembrane helix</keyword>